<sequence>MMPTDGSYFHLHLVSDSTGETLITVSRAVAAQYANVSPVEHVYPLVRSQKQLDRVLTEIEEAPGIVLFTLLEKDLVGRLEAKCEEINIPSLSIIGPVMQLFQAYLGSSTTGRVGAQHTLNAEYFKRIDALNYSMIHDDGQHVEGLEDADVVLVGVSRTSKTPTSIYLANRGIRTANVPLVPGIAIPHQLETLTKPLVVSLHATPERLIQVRQNRLLSMGATVGNEDYIDRQSVNDEVSFARRLSAKYGWALLEVTRRSIEETAAAVMKLLADRQRQRQE</sequence>
<proteinExistence type="inferred from homology"/>
<organism>
    <name type="scientific">Rhodopseudomonas palustris (strain BisB18)</name>
    <dbReference type="NCBI Taxonomy" id="316056"/>
    <lineage>
        <taxon>Bacteria</taxon>
        <taxon>Pseudomonadati</taxon>
        <taxon>Pseudomonadota</taxon>
        <taxon>Alphaproteobacteria</taxon>
        <taxon>Hyphomicrobiales</taxon>
        <taxon>Nitrobacteraceae</taxon>
        <taxon>Rhodopseudomonas</taxon>
    </lineage>
</organism>
<evidence type="ECO:0000255" key="1">
    <source>
        <dbReference type="HAMAP-Rule" id="MF_00921"/>
    </source>
</evidence>
<feature type="chain" id="PRO_0000316726" description="Putative pyruvate, phosphate dikinase regulatory protein">
    <location>
        <begin position="1"/>
        <end position="279"/>
    </location>
</feature>
<feature type="binding site" evidence="1">
    <location>
        <begin position="154"/>
        <end position="161"/>
    </location>
    <ligand>
        <name>ADP</name>
        <dbReference type="ChEBI" id="CHEBI:456216"/>
    </ligand>
</feature>
<gene>
    <name type="ordered locus">RPC_0294</name>
</gene>
<dbReference type="EC" id="2.7.11.32" evidence="1"/>
<dbReference type="EC" id="2.7.4.27" evidence="1"/>
<dbReference type="EMBL" id="CP000301">
    <property type="protein sequence ID" value="ABD85869.1"/>
    <property type="molecule type" value="Genomic_DNA"/>
</dbReference>
<dbReference type="SMR" id="Q21CL7"/>
<dbReference type="STRING" id="316056.RPC_0294"/>
<dbReference type="KEGG" id="rpc:RPC_0294"/>
<dbReference type="eggNOG" id="COG1806">
    <property type="taxonomic scope" value="Bacteria"/>
</dbReference>
<dbReference type="HOGENOM" id="CLU_046206_2_0_5"/>
<dbReference type="GO" id="GO:0043531">
    <property type="term" value="F:ADP binding"/>
    <property type="evidence" value="ECO:0007669"/>
    <property type="project" value="UniProtKB-UniRule"/>
</dbReference>
<dbReference type="GO" id="GO:0005524">
    <property type="term" value="F:ATP binding"/>
    <property type="evidence" value="ECO:0007669"/>
    <property type="project" value="InterPro"/>
</dbReference>
<dbReference type="GO" id="GO:0016776">
    <property type="term" value="F:phosphotransferase activity, phosphate group as acceptor"/>
    <property type="evidence" value="ECO:0007669"/>
    <property type="project" value="UniProtKB-UniRule"/>
</dbReference>
<dbReference type="GO" id="GO:0004674">
    <property type="term" value="F:protein serine/threonine kinase activity"/>
    <property type="evidence" value="ECO:0007669"/>
    <property type="project" value="UniProtKB-UniRule"/>
</dbReference>
<dbReference type="HAMAP" id="MF_00921">
    <property type="entry name" value="PDRP"/>
    <property type="match status" value="1"/>
</dbReference>
<dbReference type="InterPro" id="IPR005177">
    <property type="entry name" value="Kinase-pyrophosphorylase"/>
</dbReference>
<dbReference type="InterPro" id="IPR026565">
    <property type="entry name" value="PPDK_reg"/>
</dbReference>
<dbReference type="NCBIfam" id="NF003742">
    <property type="entry name" value="PRK05339.1"/>
    <property type="match status" value="1"/>
</dbReference>
<dbReference type="PANTHER" id="PTHR31756">
    <property type="entry name" value="PYRUVATE, PHOSPHATE DIKINASE REGULATORY PROTEIN 1, CHLOROPLASTIC"/>
    <property type="match status" value="1"/>
</dbReference>
<dbReference type="PANTHER" id="PTHR31756:SF3">
    <property type="entry name" value="PYRUVATE, PHOSPHATE DIKINASE REGULATORY PROTEIN 1, CHLOROPLASTIC"/>
    <property type="match status" value="1"/>
</dbReference>
<dbReference type="Pfam" id="PF03618">
    <property type="entry name" value="Kinase-PPPase"/>
    <property type="match status" value="1"/>
</dbReference>
<keyword id="KW-0418">Kinase</keyword>
<keyword id="KW-0547">Nucleotide-binding</keyword>
<keyword id="KW-0723">Serine/threonine-protein kinase</keyword>
<keyword id="KW-0808">Transferase</keyword>
<reference key="1">
    <citation type="submission" date="2006-03" db="EMBL/GenBank/DDBJ databases">
        <title>Complete sequence of Rhodopseudomonas palustris BisB18.</title>
        <authorList>
            <consortium name="US DOE Joint Genome Institute"/>
            <person name="Copeland A."/>
            <person name="Lucas S."/>
            <person name="Lapidus A."/>
            <person name="Barry K."/>
            <person name="Detter J.C."/>
            <person name="Glavina del Rio T."/>
            <person name="Hammon N."/>
            <person name="Israni S."/>
            <person name="Dalin E."/>
            <person name="Tice H."/>
            <person name="Pitluck S."/>
            <person name="Chain P."/>
            <person name="Malfatti S."/>
            <person name="Shin M."/>
            <person name="Vergez L."/>
            <person name="Schmutz J."/>
            <person name="Larimer F."/>
            <person name="Land M."/>
            <person name="Hauser L."/>
            <person name="Pelletier D.A."/>
            <person name="Kyrpides N."/>
            <person name="Anderson I."/>
            <person name="Oda Y."/>
            <person name="Harwood C.S."/>
            <person name="Richardson P."/>
        </authorList>
    </citation>
    <scope>NUCLEOTIDE SEQUENCE [LARGE SCALE GENOMIC DNA]</scope>
    <source>
        <strain>BisB18</strain>
    </source>
</reference>
<comment type="function">
    <text evidence="1">Bifunctional serine/threonine kinase and phosphorylase involved in the regulation of the pyruvate, phosphate dikinase (PPDK) by catalyzing its phosphorylation/dephosphorylation.</text>
</comment>
<comment type="catalytic activity">
    <reaction evidence="1">
        <text>N(tele)-phospho-L-histidyl/L-threonyl-[pyruvate, phosphate dikinase] + ADP = N(tele)-phospho-L-histidyl/O-phospho-L-threonyl-[pyruvate, phosphate dikinase] + AMP + H(+)</text>
        <dbReference type="Rhea" id="RHEA:43692"/>
        <dbReference type="Rhea" id="RHEA-COMP:10650"/>
        <dbReference type="Rhea" id="RHEA-COMP:10651"/>
        <dbReference type="ChEBI" id="CHEBI:15378"/>
        <dbReference type="ChEBI" id="CHEBI:30013"/>
        <dbReference type="ChEBI" id="CHEBI:61977"/>
        <dbReference type="ChEBI" id="CHEBI:83586"/>
        <dbReference type="ChEBI" id="CHEBI:456215"/>
        <dbReference type="ChEBI" id="CHEBI:456216"/>
        <dbReference type="EC" id="2.7.11.32"/>
    </reaction>
</comment>
<comment type="catalytic activity">
    <reaction evidence="1">
        <text>N(tele)-phospho-L-histidyl/O-phospho-L-threonyl-[pyruvate, phosphate dikinase] + phosphate + H(+) = N(tele)-phospho-L-histidyl/L-threonyl-[pyruvate, phosphate dikinase] + diphosphate</text>
        <dbReference type="Rhea" id="RHEA:43696"/>
        <dbReference type="Rhea" id="RHEA-COMP:10650"/>
        <dbReference type="Rhea" id="RHEA-COMP:10651"/>
        <dbReference type="ChEBI" id="CHEBI:15378"/>
        <dbReference type="ChEBI" id="CHEBI:30013"/>
        <dbReference type="ChEBI" id="CHEBI:33019"/>
        <dbReference type="ChEBI" id="CHEBI:43474"/>
        <dbReference type="ChEBI" id="CHEBI:61977"/>
        <dbReference type="ChEBI" id="CHEBI:83586"/>
        <dbReference type="EC" id="2.7.4.27"/>
    </reaction>
</comment>
<comment type="similarity">
    <text evidence="1">Belongs to the pyruvate, phosphate/water dikinase regulatory protein family. PDRP subfamily.</text>
</comment>
<protein>
    <recommendedName>
        <fullName evidence="1">Putative pyruvate, phosphate dikinase regulatory protein</fullName>
        <shortName evidence="1">PPDK regulatory protein</shortName>
        <ecNumber evidence="1">2.7.11.32</ecNumber>
        <ecNumber evidence="1">2.7.4.27</ecNumber>
    </recommendedName>
</protein>
<accession>Q21CL7</accession>
<name>PDRP_RHOPB</name>